<comment type="function">
    <text evidence="3 4 9">Essential component of the PAM complex, a complex required for the translocation of transit peptide-containing proteins from the inner membrane into the mitochondrial matrix in an ATP-dependent manner. Constitutes the ATP-driven core of the motor and binds the precursor preprotein. Required for the import of the processed frataxin homolog YFH1 into the mitochondrion.</text>
</comment>
<comment type="catalytic activity">
    <reaction evidence="1">
        <text>ATP + H2O = ADP + phosphate + H(+)</text>
        <dbReference type="Rhea" id="RHEA:13065"/>
        <dbReference type="ChEBI" id="CHEBI:15377"/>
        <dbReference type="ChEBI" id="CHEBI:15378"/>
        <dbReference type="ChEBI" id="CHEBI:30616"/>
        <dbReference type="ChEBI" id="CHEBI:43474"/>
        <dbReference type="ChEBI" id="CHEBI:456216"/>
        <dbReference type="EC" id="3.6.4.10"/>
    </reaction>
</comment>
<comment type="subunit">
    <text evidence="4 5 6 7">Component of the PAM complex, at least composed of SSC1 (mtHsp70), MGE1, TIM44, PAM16/TIM16, PAM17 and PAM18/TIM14. In the complex, SSC1 interacts directly with PAM18 and TIM44. Interacts with NAP1.</text>
</comment>
<comment type="interaction">
    <interactant intactId="EBI-8637">
        <id>P0CS90</id>
    </interactant>
    <interactant intactId="EBI-7165">
        <id>P08417</id>
        <label>FUM1</label>
    </interactant>
    <organismsDiffer>false</organismsDiffer>
    <experiments>2</experiments>
</comment>
<comment type="interaction">
    <interactant intactId="EBI-8637">
        <id>P0CS90</id>
    </interactant>
    <interactant intactId="EBI-21547">
        <id>P38257</id>
        <label>MMS4</label>
    </interactant>
    <organismsDiffer>false</organismsDiffer>
    <experiments>2</experiments>
</comment>
<comment type="interaction">
    <interactant intactId="EBI-8637">
        <id>P0CS90</id>
    </interactant>
    <interactant intactId="EBI-11318">
        <id>P32335</id>
        <label>MSS51</label>
    </interactant>
    <organismsDiffer>false</organismsDiffer>
    <experiments>2</experiments>
</comment>
<comment type="interaction">
    <interactant intactId="EBI-8637">
        <id>P0CS90</id>
    </interactant>
    <interactant intactId="EBI-19517">
        <id>P53632</id>
        <label>PAP2</label>
    </interactant>
    <organismsDiffer>false</organismsDiffer>
    <experiments>2</experiments>
</comment>
<comment type="interaction">
    <interactant intactId="EBI-8637">
        <id>P0CS90</id>
    </interactant>
    <interactant intactId="EBI-14780">
        <id>P06779</id>
        <label>RAD7</label>
    </interactant>
    <organismsDiffer>false</organismsDiffer>
    <experiments>2</experiments>
</comment>
<comment type="interaction">
    <interactant intactId="EBI-8637">
        <id>P0CS90</id>
    </interactant>
    <interactant intactId="EBI-16977">
        <id>P38827</id>
        <label>SET1</label>
    </interactant>
    <organismsDiffer>false</organismsDiffer>
    <experiments>2</experiments>
</comment>
<comment type="interaction">
    <interactant intactId="EBI-8637">
        <id>P0CS90</id>
    </interactant>
    <interactant intactId="EBI-9141">
        <id>Q01852</id>
        <label>TIM44</label>
    </interactant>
    <organismsDiffer>false</organismsDiffer>
    <experiments>4</experiments>
</comment>
<comment type="interaction">
    <interactant intactId="EBI-8637">
        <id>P0CS90</id>
    </interactant>
    <interactant intactId="EBI-6490">
        <id>P12294</id>
        <label>ENS2</label>
    </interactant>
    <organismsDiffer>true</organismsDiffer>
    <experiments>2</experiments>
</comment>
<comment type="subcellular location">
    <subcellularLocation>
        <location evidence="8">Mitochondrion matrix</location>
    </subcellularLocation>
</comment>
<comment type="similarity">
    <text evidence="11">Belongs to the heat shock protein 70 family.</text>
</comment>
<comment type="caution">
    <text evidence="11">S.cerevisiae displays strain polymorphism with regard to Endo.SceI endouclease activity. This is due to the mitochondrion-encoded, catalytic subunit ENS2, which exhibits strain polymorphism. It can be either present as continuous ORF in the mitochondrial genome (e.g. strain IAM 4274), present but disrupted by the insertion of GC clusters (e.g. strain D273-10B/A), or completely absent in the mitochondrial genome (e.g. strain S288c). Sequences for the 2 subunits ENS2 (AC P12294) and SSC1 (AC P0CS91) for an active Endo.SceI endonuclease can be found in strain IAM 4274.</text>
</comment>
<keyword id="KW-0067">ATP-binding</keyword>
<keyword id="KW-0143">Chaperone</keyword>
<keyword id="KW-0903">Direct protein sequencing</keyword>
<keyword id="KW-0378">Hydrolase</keyword>
<keyword id="KW-0496">Mitochondrion</keyword>
<keyword id="KW-0547">Nucleotide-binding</keyword>
<keyword id="KW-0597">Phosphoprotein</keyword>
<keyword id="KW-1185">Reference proteome</keyword>
<keyword id="KW-0346">Stress response</keyword>
<keyword id="KW-0809">Transit peptide</keyword>
<gene>
    <name evidence="10 12" type="primary">SSC1</name>
    <name evidence="12" type="synonym">ENS1</name>
    <name type="ordered locus">YJR045C</name>
    <name type="ORF">J1639</name>
</gene>
<proteinExistence type="evidence at protein level"/>
<accession>P0CS90</accession>
<accession>D6VWL6</accession>
<accession>P12398</accession>
<organism>
    <name type="scientific">Saccharomyces cerevisiae (strain ATCC 204508 / S288c)</name>
    <name type="common">Baker's yeast</name>
    <dbReference type="NCBI Taxonomy" id="559292"/>
    <lineage>
        <taxon>Eukaryota</taxon>
        <taxon>Fungi</taxon>
        <taxon>Dikarya</taxon>
        <taxon>Ascomycota</taxon>
        <taxon>Saccharomycotina</taxon>
        <taxon>Saccharomycetes</taxon>
        <taxon>Saccharomycetales</taxon>
        <taxon>Saccharomycetaceae</taxon>
        <taxon>Saccharomyces</taxon>
    </lineage>
</organism>
<feature type="transit peptide" description="Mitochondrion" evidence="8">
    <location>
        <begin position="1"/>
        <end position="23"/>
    </location>
</feature>
<feature type="chain" id="PRO_0000013553" description="Import motor subunit, mitochondrial">
    <location>
        <begin position="24"/>
        <end position="654"/>
    </location>
</feature>
<feature type="region of interest" description="Disordered" evidence="2">
    <location>
        <begin position="629"/>
        <end position="654"/>
    </location>
</feature>
<feature type="compositionally biased region" description="Low complexity" evidence="2">
    <location>
        <begin position="637"/>
        <end position="646"/>
    </location>
</feature>
<feature type="modified residue" description="Phosphothreonine" evidence="13">
    <location>
        <position position="330"/>
    </location>
</feature>
<feature type="mutagenesis site" description="No interaction with TIM44." evidence="4">
    <original>P</original>
    <variation>S</variation>
    <location>
        <position position="442"/>
    </location>
</feature>
<evidence type="ECO:0000250" key="1">
    <source>
        <dbReference type="UniProtKB" id="Q05931"/>
    </source>
</evidence>
<evidence type="ECO:0000256" key="2">
    <source>
        <dbReference type="SAM" id="MobiDB-lite"/>
    </source>
</evidence>
<evidence type="ECO:0000269" key="3">
    <source>
    </source>
</evidence>
<evidence type="ECO:0000269" key="4">
    <source>
    </source>
</evidence>
<evidence type="ECO:0000269" key="5">
    <source>
    </source>
</evidence>
<evidence type="ECO:0000269" key="6">
    <source>
    </source>
</evidence>
<evidence type="ECO:0000269" key="7">
    <source>
    </source>
</evidence>
<evidence type="ECO:0000269" key="8">
    <source>
    </source>
</evidence>
<evidence type="ECO:0000269" key="9">
    <source>
    </source>
</evidence>
<evidence type="ECO:0000303" key="10">
    <source>
    </source>
</evidence>
<evidence type="ECO:0000305" key="11"/>
<evidence type="ECO:0000312" key="12">
    <source>
        <dbReference type="SGD" id="S000003806"/>
    </source>
</evidence>
<evidence type="ECO:0007744" key="13">
    <source>
    </source>
</evidence>
<sequence>MLAAKNILNRSSLSSSFRIATRLQSTKVQGSVIGIDLGTTNSAVAIMEGKVPKIIENAEGSRTTPSVVAFTKEGERLVGIPAKRQAVVNPENTLFATKRLIGRRFEDAEVQRDIKQVPYKIVKHSNGDAWVEARGQTYSPAQIGGFVLNKMKETAEAYLGKPVKNAVVTVPAYFNDSQRQATKDAGQIVGLNVLRVVNEPTAAALAYGLEKSDSKVVAVFDLGGGTFDISILDIDNGVFEVKSTNGDTHLGGEDFDIYLLREIVSRFKTETGIDLENDRMAIQRIREAAEKAKIELSSTVSTEINLPFITADASGPKHINMKFSRAQFETLTAPLVKRTVDPVKKALKDAGLSTSDISEVLLVGGMSRMPKVVETVKSLFGKDPSKAVNPDEAVAIGAAVQGAVLSGEVTDVLLLDVTPLSLGIETLGGVFTRLIPRNTTIPTKKSQIFSTAAAGQTSVEIRVFQGERELVRDNKLIGNFTLAGIPPAPKGVPQIEVTFDIDADGIINVSARDKATNKDSSITVAGSSGLSENEIEQMVNDAEKFKSQDEARKQAIETANKADQLANDTENSLKEFEGKVDKAEAQKVRDQITSLKELVARVQGGEEVNAEELKTKTEELQTSSMKLFEQLYKNDSNNNNNNNGNNAESGETKQ</sequence>
<name>HSP77_YEAST</name>
<reference key="1">
    <citation type="journal article" date="1989" name="Mol. Cell. Biol.">
        <title>SSC1, an essential member of the yeast HSP70 multigene family, encodes a mitochondrial protein.</title>
        <authorList>
            <person name="Craig E.A."/>
            <person name="Kramer J."/>
            <person name="Shilling J."/>
            <person name="Werner-Washburne M."/>
            <person name="Holmes S."/>
            <person name="Kosic-Smithers J."/>
            <person name="Nicolet C.M."/>
        </authorList>
    </citation>
    <scope>NUCLEOTIDE SEQUENCE [GENOMIC DNA]</scope>
    <source>
        <strain>ATCC 24657 / D273-10B</strain>
    </source>
</reference>
<reference key="2">
    <citation type="journal article" date="1995" name="Yeast">
        <title>Analysis of a 42.5 kb DNA sequence of chromosome X reveals three tRNA genes and 14 new open reading frames including a gene most probably belonging to the family of ubiquitin-protein ligases.</title>
        <authorList>
            <person name="Huang M.-E."/>
            <person name="Chuat J.-C."/>
            <person name="Galibert F."/>
        </authorList>
    </citation>
    <scope>NUCLEOTIDE SEQUENCE [GENOMIC DNA]</scope>
    <source>
        <strain>ATCC 204508 / S288c</strain>
    </source>
</reference>
<reference key="3">
    <citation type="journal article" date="1996" name="EMBO J.">
        <title>Complete nucleotide sequence of Saccharomyces cerevisiae chromosome X.</title>
        <authorList>
            <person name="Galibert F."/>
            <person name="Alexandraki D."/>
            <person name="Baur A."/>
            <person name="Boles E."/>
            <person name="Chalwatzis N."/>
            <person name="Chuat J.-C."/>
            <person name="Coster F."/>
            <person name="Cziepluch C."/>
            <person name="de Haan M."/>
            <person name="Domdey H."/>
            <person name="Durand P."/>
            <person name="Entian K.-D."/>
            <person name="Gatius M."/>
            <person name="Goffeau A."/>
            <person name="Grivell L.A."/>
            <person name="Hennemann A."/>
            <person name="Herbert C.J."/>
            <person name="Heumann K."/>
            <person name="Hilger F."/>
            <person name="Hollenberg C.P."/>
            <person name="Huang M.-E."/>
            <person name="Jacq C."/>
            <person name="Jauniaux J.-C."/>
            <person name="Katsoulou C."/>
            <person name="Kirchrath L."/>
            <person name="Kleine K."/>
            <person name="Kordes E."/>
            <person name="Koetter P."/>
            <person name="Liebl S."/>
            <person name="Louis E.J."/>
            <person name="Manus V."/>
            <person name="Mewes H.-W."/>
            <person name="Miosga T."/>
            <person name="Obermaier B."/>
            <person name="Perea J."/>
            <person name="Pohl T.M."/>
            <person name="Portetelle D."/>
            <person name="Pujol A."/>
            <person name="Purnelle B."/>
            <person name="Ramezani Rad M."/>
            <person name="Rasmussen S.W."/>
            <person name="Rose M."/>
            <person name="Rossau R."/>
            <person name="Schaaff-Gerstenschlaeger I."/>
            <person name="Smits P.H.M."/>
            <person name="Scarcez T."/>
            <person name="Soriano N."/>
            <person name="To Van D."/>
            <person name="Tzermia M."/>
            <person name="Van Broekhoven A."/>
            <person name="Vandenbol M."/>
            <person name="Wedler H."/>
            <person name="von Wettstein D."/>
            <person name="Wambutt R."/>
            <person name="Zagulski M."/>
            <person name="Zollner A."/>
            <person name="Karpfinger-Hartl L."/>
        </authorList>
    </citation>
    <scope>NUCLEOTIDE SEQUENCE [LARGE SCALE GENOMIC DNA]</scope>
    <source>
        <strain>ATCC 204508 / S288c</strain>
    </source>
</reference>
<reference key="4">
    <citation type="journal article" date="2014" name="G3 (Bethesda)">
        <title>The reference genome sequence of Saccharomyces cerevisiae: Then and now.</title>
        <authorList>
            <person name="Engel S.R."/>
            <person name="Dietrich F.S."/>
            <person name="Fisk D.G."/>
            <person name="Binkley G."/>
            <person name="Balakrishnan R."/>
            <person name="Costanzo M.C."/>
            <person name="Dwight S.S."/>
            <person name="Hitz B.C."/>
            <person name="Karra K."/>
            <person name="Nash R.S."/>
            <person name="Weng S."/>
            <person name="Wong E.D."/>
            <person name="Lloyd P."/>
            <person name="Skrzypek M.S."/>
            <person name="Miyasato S.R."/>
            <person name="Simison M."/>
            <person name="Cherry J.M."/>
        </authorList>
    </citation>
    <scope>GENOME REANNOTATION</scope>
    <source>
        <strain>ATCC 204508 / S288c</strain>
    </source>
</reference>
<reference key="5">
    <citation type="journal article" date="1990" name="EMBO J.">
        <title>A precursor protein partly translocated into yeast mitochondria is bound to a 70 kd mitochondrial stress protein.</title>
        <authorList>
            <person name="Scherer P.E."/>
            <person name="Krieg U.C."/>
            <person name="Hwang S.T."/>
            <person name="Vestweber D."/>
            <person name="Schatz G."/>
        </authorList>
    </citation>
    <scope>PROTEIN SEQUENCE OF 24-38</scope>
    <scope>SUBCELLULAR LOCATION</scope>
    <source>
        <strain>ATCC 24657 / D273-10B</strain>
    </source>
</reference>
<reference key="6">
    <citation type="journal article" date="1995" name="Adv. Biophys.">
        <title>Multi-site-specific endonucleases and the initiation of homologous genetic recombination in yeast.</title>
        <authorList>
            <person name="Shibata T."/>
            <person name="Nakagawa K."/>
            <person name="Morishima N."/>
        </authorList>
    </citation>
    <scope>FUNCTION OF ENDONUCLEASE SCEI</scope>
</reference>
<reference key="7">
    <citation type="journal article" date="2000" name="Mol. Cell. Biol.">
        <title>Role of the mitochondrial Hsp70s, Ssc1 and Ssq1, in the maturation of Yfh1.</title>
        <authorList>
            <person name="Voisine C."/>
            <person name="Schilke B."/>
            <person name="Ohlson M."/>
            <person name="Beinert H."/>
            <person name="Marszalek J."/>
            <person name="Craig E.A."/>
        </authorList>
    </citation>
    <scope>FUNCTION</scope>
</reference>
<reference key="8">
    <citation type="journal article" date="2002" name="EMBO J.">
        <title>The Hsp70 peptide-binding domain determines the interaction of the ATPase domain with Tim44 in mitochondria.</title>
        <authorList>
            <person name="Strub A."/>
            <person name="Roettgers K."/>
            <person name="Voos W."/>
        </authorList>
    </citation>
    <scope>FUNCTION</scope>
    <scope>INTERACTION WITH TIM44</scope>
    <scope>MUTAGENESIS OF PRO-442</scope>
</reference>
<reference key="9">
    <citation type="journal article" date="2003" name="EMBO J.">
        <title>Tim14, a novel key component of the import motor of the TIM23 protein translocase of mitochondria.</title>
        <authorList>
            <person name="Mokranjac D."/>
            <person name="Sichting M."/>
            <person name="Neupert W."/>
            <person name="Hell K."/>
        </authorList>
    </citation>
    <scope>INTERACTION WITH PAM18</scope>
</reference>
<reference key="10">
    <citation type="journal article" date="2005" name="Mol. Cell. Biol.">
        <title>Pam17 is required for architecture and translocation activity of the mitochondrial protein import motor.</title>
        <authorList>
            <person name="van der Laan M."/>
            <person name="Chacinska A."/>
            <person name="Lind M."/>
            <person name="Perschil I."/>
            <person name="Sickmann A."/>
            <person name="Meyer H.E."/>
            <person name="Guiard B."/>
            <person name="Meisinger C."/>
            <person name="Pfanner N."/>
            <person name="Rehling P."/>
        </authorList>
    </citation>
    <scope>IDENTIFICATION IN THE PAM COMPLEX WITH PAM16; PAM17; PAM18; TIM44 AND MGE1</scope>
</reference>
<reference key="11">
    <citation type="journal article" date="2007" name="Mol. Cell. Proteomics">
        <title>Profiling phosphoproteins of yeast mitochondria reveals a role of phosphorylation in assembly of the ATP synthase.</title>
        <authorList>
            <person name="Reinders J."/>
            <person name="Wagner K."/>
            <person name="Zahedi R.P."/>
            <person name="Stojanovski D."/>
            <person name="Eyrich B."/>
            <person name="van der Laan M."/>
            <person name="Rehling P."/>
            <person name="Sickmann A."/>
            <person name="Pfanner N."/>
            <person name="Meisinger C."/>
        </authorList>
    </citation>
    <scope>PHOSPHORYLATION [LARGE SCALE ANALYSIS] AT THR-330</scope>
    <scope>IDENTIFICATION BY MASS SPECTROMETRY [LARGE SCALE ANALYSIS]</scope>
    <source>
        <strain>ATCC 76625 / YPH499</strain>
    </source>
</reference>
<reference key="12">
    <citation type="journal article" date="2008" name="Mol. Cell. Biol.">
        <title>Phosphorylation by casein kinase 2 regulates Nap1 localization and function.</title>
        <authorList>
            <person name="Calvert M.E.K."/>
            <person name="Keck K.M."/>
            <person name="Ptak C."/>
            <person name="Shabanowitz J."/>
            <person name="Hunt D.F."/>
            <person name="Pemberton L.F."/>
        </authorList>
    </citation>
    <scope>INTERACTION WITH NAP1</scope>
    <scope>IDENTIFICATION BY MASS SPECTROMETRY</scope>
</reference>
<reference key="13">
    <citation type="journal article" date="2008" name="Mol. Cell. Proteomics">
        <title>A multidimensional chromatography technology for in-depth phosphoproteome analysis.</title>
        <authorList>
            <person name="Albuquerque C.P."/>
            <person name="Smolka M.B."/>
            <person name="Payne S.H."/>
            <person name="Bafna V."/>
            <person name="Eng J."/>
            <person name="Zhou H."/>
        </authorList>
    </citation>
    <scope>IDENTIFICATION BY MASS SPECTROMETRY [LARGE SCALE ANALYSIS]</scope>
</reference>
<reference key="14">
    <citation type="journal article" date="2009" name="Science">
        <title>Global analysis of Cdk1 substrate phosphorylation sites provides insights into evolution.</title>
        <authorList>
            <person name="Holt L.J."/>
            <person name="Tuch B.B."/>
            <person name="Villen J."/>
            <person name="Johnson A.D."/>
            <person name="Gygi S.P."/>
            <person name="Morgan D.O."/>
        </authorList>
    </citation>
    <scope>IDENTIFICATION BY MASS SPECTROMETRY [LARGE SCALE ANALYSIS]</scope>
</reference>
<reference key="15">
    <citation type="journal article" date="2012" name="Proc. Natl. Acad. Sci. U.S.A.">
        <title>N-terminal acetylome analyses and functional insights of the N-terminal acetyltransferase NatB.</title>
        <authorList>
            <person name="Van Damme P."/>
            <person name="Lasa M."/>
            <person name="Polevoda B."/>
            <person name="Gazquez C."/>
            <person name="Elosegui-Artola A."/>
            <person name="Kim D.S."/>
            <person name="De Juan-Pardo E."/>
            <person name="Demeyer K."/>
            <person name="Hole K."/>
            <person name="Larrea E."/>
            <person name="Timmerman E."/>
            <person name="Prieto J."/>
            <person name="Arnesen T."/>
            <person name="Sherman F."/>
            <person name="Gevaert K."/>
            <person name="Aldabe R."/>
        </authorList>
    </citation>
    <scope>IDENTIFICATION BY MASS SPECTROMETRY [LARGE SCALE ANALYSIS]</scope>
</reference>
<dbReference type="EC" id="3.6.4.10" evidence="1"/>
<dbReference type="EMBL" id="M27229">
    <property type="protein sequence ID" value="AAA63792.1"/>
    <property type="molecule type" value="Genomic_DNA"/>
</dbReference>
<dbReference type="EMBL" id="L36344">
    <property type="protein sequence ID" value="AAA88747.1"/>
    <property type="molecule type" value="Genomic_DNA"/>
</dbReference>
<dbReference type="EMBL" id="Z49545">
    <property type="protein sequence ID" value="CAA89573.1"/>
    <property type="molecule type" value="Genomic_DNA"/>
</dbReference>
<dbReference type="EMBL" id="BK006943">
    <property type="protein sequence ID" value="DAA08832.1"/>
    <property type="molecule type" value="Genomic_DNA"/>
</dbReference>
<dbReference type="PIR" id="A32493">
    <property type="entry name" value="HHBYS1"/>
</dbReference>
<dbReference type="RefSeq" id="NP_012579.1">
    <property type="nucleotide sequence ID" value="NM_001181703.1"/>
</dbReference>
<dbReference type="SMR" id="P0CS90"/>
<dbReference type="BioGRID" id="33797">
    <property type="interactions" value="1004"/>
</dbReference>
<dbReference type="ComplexPortal" id="CPX-1423">
    <property type="entry name" value="COX1 pre-assembly complex"/>
</dbReference>
<dbReference type="ComplexPortal" id="CPX-1741">
    <property type="entry name" value="Endonuclease SceI"/>
</dbReference>
<dbReference type="ComplexPortal" id="CPX-539">
    <property type="entry name" value="TIM23 mitochondrial inner membrane pre-sequence translocase complex, motor variant"/>
</dbReference>
<dbReference type="FunCoup" id="P0CS90">
    <property type="interactions" value="2096"/>
</dbReference>
<dbReference type="IntAct" id="P0CS90">
    <property type="interactions" value="268"/>
</dbReference>
<dbReference type="MINT" id="P0CS90"/>
<dbReference type="STRING" id="4932.YJR045C"/>
<dbReference type="iPTMnet" id="P0CS90"/>
<dbReference type="PaxDb" id="4932-YJR045C"/>
<dbReference type="PeptideAtlas" id="P0CS90"/>
<dbReference type="EnsemblFungi" id="YJR045C_mRNA">
    <property type="protein sequence ID" value="YJR045C"/>
    <property type="gene ID" value="YJR045C"/>
</dbReference>
<dbReference type="GeneID" id="853503"/>
<dbReference type="KEGG" id="sce:YJR045C"/>
<dbReference type="AGR" id="SGD:S000003806"/>
<dbReference type="SGD" id="S000003806">
    <property type="gene designation" value="SSC1"/>
</dbReference>
<dbReference type="VEuPathDB" id="FungiDB:YJR045C"/>
<dbReference type="eggNOG" id="KOG0102">
    <property type="taxonomic scope" value="Eukaryota"/>
</dbReference>
<dbReference type="GeneTree" id="ENSGT00920000149123"/>
<dbReference type="HOGENOM" id="CLU_005965_2_1_1"/>
<dbReference type="InParanoid" id="P0CS90"/>
<dbReference type="OMA" id="MGTDWKI"/>
<dbReference type="OrthoDB" id="2401965at2759"/>
<dbReference type="BioCyc" id="YEAST:G3O-31680-MONOMER"/>
<dbReference type="BRENDA" id="7.4.2.3">
    <property type="organism ID" value="984"/>
</dbReference>
<dbReference type="Reactome" id="R-SCE-3371453">
    <property type="pathway name" value="Regulation of HSF1-mediated heat shock response"/>
</dbReference>
<dbReference type="Reactome" id="R-SCE-9837999">
    <property type="pathway name" value="Mitochondrial protein degradation"/>
</dbReference>
<dbReference type="Reactome" id="R-SCE-9865881">
    <property type="pathway name" value="Complex III assembly"/>
</dbReference>
<dbReference type="BioGRID-ORCS" id="853503">
    <property type="hits" value="3 hits in 10 CRISPR screens"/>
</dbReference>
<dbReference type="PRO" id="PR:P0CS90"/>
<dbReference type="Proteomes" id="UP000002311">
    <property type="component" value="Chromosome X"/>
</dbReference>
<dbReference type="RNAct" id="P0CS90">
    <property type="molecule type" value="protein"/>
</dbReference>
<dbReference type="GO" id="GO:0005737">
    <property type="term" value="C:cytoplasm"/>
    <property type="evidence" value="ECO:0000318"/>
    <property type="project" value="GO_Central"/>
</dbReference>
<dbReference type="GO" id="GO:1905347">
    <property type="term" value="C:endodeoxyribonuclease complex"/>
    <property type="evidence" value="ECO:0000314"/>
    <property type="project" value="ComplexPortal"/>
</dbReference>
<dbReference type="GO" id="GO:0005743">
    <property type="term" value="C:mitochondrial inner membrane"/>
    <property type="evidence" value="ECO:0000314"/>
    <property type="project" value="SGD"/>
</dbReference>
<dbReference type="GO" id="GO:0042645">
    <property type="term" value="C:mitochondrial nucleoid"/>
    <property type="evidence" value="ECO:0000314"/>
    <property type="project" value="SGD"/>
</dbReference>
<dbReference type="GO" id="GO:0005739">
    <property type="term" value="C:mitochondrion"/>
    <property type="evidence" value="ECO:0000314"/>
    <property type="project" value="ComplexPortal"/>
</dbReference>
<dbReference type="GO" id="GO:0001405">
    <property type="term" value="C:PAM complex, Tim23 associated import motor"/>
    <property type="evidence" value="ECO:0000314"/>
    <property type="project" value="SGD"/>
</dbReference>
<dbReference type="GO" id="GO:0005744">
    <property type="term" value="C:TIM23 mitochondrial import inner membrane translocase complex"/>
    <property type="evidence" value="ECO:0000303"/>
    <property type="project" value="ComplexPortal"/>
</dbReference>
<dbReference type="GO" id="GO:0005524">
    <property type="term" value="F:ATP binding"/>
    <property type="evidence" value="ECO:0007669"/>
    <property type="project" value="UniProtKB-KW"/>
</dbReference>
<dbReference type="GO" id="GO:0016887">
    <property type="term" value="F:ATP hydrolysis activity"/>
    <property type="evidence" value="ECO:0000314"/>
    <property type="project" value="SGD"/>
</dbReference>
<dbReference type="GO" id="GO:0140662">
    <property type="term" value="F:ATP-dependent protein folding chaperone"/>
    <property type="evidence" value="ECO:0007669"/>
    <property type="project" value="InterPro"/>
</dbReference>
<dbReference type="GO" id="GO:0030234">
    <property type="term" value="F:enzyme regulator activity"/>
    <property type="evidence" value="ECO:0000314"/>
    <property type="project" value="SGD"/>
</dbReference>
<dbReference type="GO" id="GO:0031072">
    <property type="term" value="F:heat shock protein binding"/>
    <property type="evidence" value="ECO:0000318"/>
    <property type="project" value="GO_Central"/>
</dbReference>
<dbReference type="GO" id="GO:0008566">
    <property type="term" value="F:mitochondrial protein-transporting ATPase activity"/>
    <property type="evidence" value="ECO:0000315"/>
    <property type="project" value="FlyBase"/>
</dbReference>
<dbReference type="GO" id="GO:0044183">
    <property type="term" value="F:protein folding chaperone"/>
    <property type="evidence" value="ECO:0000318"/>
    <property type="project" value="GO_Central"/>
</dbReference>
<dbReference type="GO" id="GO:0051082">
    <property type="term" value="F:unfolded protein binding"/>
    <property type="evidence" value="ECO:0007669"/>
    <property type="project" value="InterPro"/>
</dbReference>
<dbReference type="GO" id="GO:0051085">
    <property type="term" value="P:chaperone cofactor-dependent protein refolding"/>
    <property type="evidence" value="ECO:0000318"/>
    <property type="project" value="GO_Central"/>
</dbReference>
<dbReference type="GO" id="GO:0006886">
    <property type="term" value="P:intracellular protein transport"/>
    <property type="evidence" value="ECO:0000303"/>
    <property type="project" value="ComplexPortal"/>
</dbReference>
<dbReference type="GO" id="GO:0016226">
    <property type="term" value="P:iron-sulfur cluster assembly"/>
    <property type="evidence" value="ECO:0000318"/>
    <property type="project" value="GO_Central"/>
</dbReference>
<dbReference type="GO" id="GO:0033617">
    <property type="term" value="P:mitochondrial cytochrome c oxidase assembly"/>
    <property type="evidence" value="ECO:0000303"/>
    <property type="project" value="ComplexPortal"/>
</dbReference>
<dbReference type="GO" id="GO:0032042">
    <property type="term" value="P:mitochondrial DNA metabolic process"/>
    <property type="evidence" value="ECO:0000314"/>
    <property type="project" value="ComplexPortal"/>
</dbReference>
<dbReference type="GO" id="GO:0033615">
    <property type="term" value="P:mitochondrial proton-transporting ATP synthase complex assembly"/>
    <property type="evidence" value="ECO:0000315"/>
    <property type="project" value="FlyBase"/>
</dbReference>
<dbReference type="GO" id="GO:0070130">
    <property type="term" value="P:negative regulation of mitochondrial translation"/>
    <property type="evidence" value="ECO:0000303"/>
    <property type="project" value="ComplexPortal"/>
</dbReference>
<dbReference type="GO" id="GO:0030150">
    <property type="term" value="P:protein import into mitochondrial matrix"/>
    <property type="evidence" value="ECO:0000314"/>
    <property type="project" value="SGD"/>
</dbReference>
<dbReference type="GO" id="GO:0042026">
    <property type="term" value="P:protein refolding"/>
    <property type="evidence" value="ECO:0000314"/>
    <property type="project" value="SGD"/>
</dbReference>
<dbReference type="GO" id="GO:0050821">
    <property type="term" value="P:protein stabilization"/>
    <property type="evidence" value="ECO:0000303"/>
    <property type="project" value="ComplexPortal"/>
</dbReference>
<dbReference type="GO" id="GO:0043335">
    <property type="term" value="P:protein unfolding"/>
    <property type="evidence" value="ECO:0000315"/>
    <property type="project" value="SGD"/>
</dbReference>
<dbReference type="GO" id="GO:0000018">
    <property type="term" value="P:regulation of DNA recombination"/>
    <property type="evidence" value="ECO:0000314"/>
    <property type="project" value="ComplexPortal"/>
</dbReference>
<dbReference type="CDD" id="cd11734">
    <property type="entry name" value="ASKHA_NBD_HSP70_Ssc1_3"/>
    <property type="match status" value="1"/>
</dbReference>
<dbReference type="FunFam" id="2.60.34.10:FF:000014">
    <property type="entry name" value="Chaperone protein DnaK HSP70"/>
    <property type="match status" value="1"/>
</dbReference>
<dbReference type="FunFam" id="3.30.30.30:FF:000003">
    <property type="entry name" value="Heat shock protein 9"/>
    <property type="match status" value="1"/>
</dbReference>
<dbReference type="FunFam" id="1.20.1270.10:FF:000007">
    <property type="entry name" value="Heat shock protein, mitochondrial"/>
    <property type="match status" value="1"/>
</dbReference>
<dbReference type="FunFam" id="3.30.420.40:FF:000004">
    <property type="entry name" value="Molecular chaperone DnaK"/>
    <property type="match status" value="1"/>
</dbReference>
<dbReference type="FunFam" id="3.90.640.10:FF:000003">
    <property type="entry name" value="Molecular chaperone DnaK"/>
    <property type="match status" value="1"/>
</dbReference>
<dbReference type="Gene3D" id="1.20.1270.10">
    <property type="match status" value="1"/>
</dbReference>
<dbReference type="Gene3D" id="3.30.420.40">
    <property type="match status" value="2"/>
</dbReference>
<dbReference type="Gene3D" id="3.90.640.10">
    <property type="entry name" value="Actin, Chain A, domain 4"/>
    <property type="match status" value="1"/>
</dbReference>
<dbReference type="Gene3D" id="2.60.34.10">
    <property type="entry name" value="Substrate Binding Domain Of DNAk, Chain A, domain 1"/>
    <property type="match status" value="1"/>
</dbReference>
<dbReference type="HAMAP" id="MF_00332">
    <property type="entry name" value="DnaK"/>
    <property type="match status" value="1"/>
</dbReference>
<dbReference type="InterPro" id="IPR043129">
    <property type="entry name" value="ATPase_NBD"/>
</dbReference>
<dbReference type="InterPro" id="IPR012725">
    <property type="entry name" value="Chaperone_DnaK"/>
</dbReference>
<dbReference type="InterPro" id="IPR018181">
    <property type="entry name" value="Heat_shock_70_CS"/>
</dbReference>
<dbReference type="InterPro" id="IPR029048">
    <property type="entry name" value="HSP70_C_sf"/>
</dbReference>
<dbReference type="InterPro" id="IPR029047">
    <property type="entry name" value="HSP70_peptide-bd_sf"/>
</dbReference>
<dbReference type="InterPro" id="IPR013126">
    <property type="entry name" value="Hsp_70_fam"/>
</dbReference>
<dbReference type="NCBIfam" id="NF001413">
    <property type="entry name" value="PRK00290.1"/>
    <property type="match status" value="1"/>
</dbReference>
<dbReference type="NCBIfam" id="TIGR02350">
    <property type="entry name" value="prok_dnaK"/>
    <property type="match status" value="1"/>
</dbReference>
<dbReference type="PANTHER" id="PTHR19375">
    <property type="entry name" value="HEAT SHOCK PROTEIN 70KDA"/>
    <property type="match status" value="1"/>
</dbReference>
<dbReference type="Pfam" id="PF00012">
    <property type="entry name" value="HSP70"/>
    <property type="match status" value="1"/>
</dbReference>
<dbReference type="PRINTS" id="PR00301">
    <property type="entry name" value="HEATSHOCK70"/>
</dbReference>
<dbReference type="SUPFAM" id="SSF53067">
    <property type="entry name" value="Actin-like ATPase domain"/>
    <property type="match status" value="2"/>
</dbReference>
<dbReference type="SUPFAM" id="SSF100934">
    <property type="entry name" value="Heat shock protein 70kD (HSP70), C-terminal subdomain"/>
    <property type="match status" value="1"/>
</dbReference>
<dbReference type="SUPFAM" id="SSF100920">
    <property type="entry name" value="Heat shock protein 70kD (HSP70), peptide-binding domain"/>
    <property type="match status" value="1"/>
</dbReference>
<dbReference type="PROSITE" id="PS00297">
    <property type="entry name" value="HSP70_1"/>
    <property type="match status" value="1"/>
</dbReference>
<dbReference type="PROSITE" id="PS00329">
    <property type="entry name" value="HSP70_2"/>
    <property type="match status" value="1"/>
</dbReference>
<dbReference type="PROSITE" id="PS01036">
    <property type="entry name" value="HSP70_3"/>
    <property type="match status" value="1"/>
</dbReference>
<protein>
    <recommendedName>
        <fullName evidence="11">Import motor subunit, mitochondrial</fullName>
        <ecNumber evidence="1">3.6.4.10</ecNumber>
    </recommendedName>
    <alternativeName>
        <fullName evidence="11">Endonuclease SceI 75 kDa subunit</fullName>
        <shortName evidence="11">Endo.SceI 75 kDa subunit</shortName>
    </alternativeName>
    <alternativeName>
        <fullName evidence="11">mtHSP70</fullName>
    </alternativeName>
</protein>